<name>HSLO_THEPX</name>
<reference key="1">
    <citation type="submission" date="2008-01" db="EMBL/GenBank/DDBJ databases">
        <title>Complete sequence of Thermoanaerobacter sp. X514.</title>
        <authorList>
            <consortium name="US DOE Joint Genome Institute"/>
            <person name="Copeland A."/>
            <person name="Lucas S."/>
            <person name="Lapidus A."/>
            <person name="Barry K."/>
            <person name="Glavina del Rio T."/>
            <person name="Dalin E."/>
            <person name="Tice H."/>
            <person name="Pitluck S."/>
            <person name="Bruce D."/>
            <person name="Goodwin L."/>
            <person name="Saunders E."/>
            <person name="Brettin T."/>
            <person name="Detter J.C."/>
            <person name="Han C."/>
            <person name="Schmutz J."/>
            <person name="Larimer F."/>
            <person name="Land M."/>
            <person name="Hauser L."/>
            <person name="Kyrpides N."/>
            <person name="Kim E."/>
            <person name="Hemme C."/>
            <person name="Fields M.W."/>
            <person name="He Z."/>
            <person name="Zhou J."/>
            <person name="Richardson P."/>
        </authorList>
    </citation>
    <scope>NUCLEOTIDE SEQUENCE [LARGE SCALE GENOMIC DNA]</scope>
    <source>
        <strain>X514</strain>
    </source>
</reference>
<dbReference type="EMBL" id="CP000923">
    <property type="protein sequence ID" value="ABY93335.1"/>
    <property type="molecule type" value="Genomic_DNA"/>
</dbReference>
<dbReference type="RefSeq" id="WP_009052585.1">
    <property type="nucleotide sequence ID" value="NC_010320.1"/>
</dbReference>
<dbReference type="SMR" id="B0K3W4"/>
<dbReference type="KEGG" id="tex:Teth514_2063"/>
<dbReference type="HOGENOM" id="CLU_054493_1_0_9"/>
<dbReference type="Proteomes" id="UP000002155">
    <property type="component" value="Chromosome"/>
</dbReference>
<dbReference type="GO" id="GO:0005737">
    <property type="term" value="C:cytoplasm"/>
    <property type="evidence" value="ECO:0007669"/>
    <property type="project" value="UniProtKB-SubCell"/>
</dbReference>
<dbReference type="GO" id="GO:0044183">
    <property type="term" value="F:protein folding chaperone"/>
    <property type="evidence" value="ECO:0007669"/>
    <property type="project" value="TreeGrafter"/>
</dbReference>
<dbReference type="GO" id="GO:0051082">
    <property type="term" value="F:unfolded protein binding"/>
    <property type="evidence" value="ECO:0007669"/>
    <property type="project" value="UniProtKB-UniRule"/>
</dbReference>
<dbReference type="GO" id="GO:0042026">
    <property type="term" value="P:protein refolding"/>
    <property type="evidence" value="ECO:0007669"/>
    <property type="project" value="TreeGrafter"/>
</dbReference>
<dbReference type="CDD" id="cd00498">
    <property type="entry name" value="Hsp33"/>
    <property type="match status" value="1"/>
</dbReference>
<dbReference type="Gene3D" id="3.55.30.10">
    <property type="entry name" value="Hsp33 domain"/>
    <property type="match status" value="1"/>
</dbReference>
<dbReference type="Gene3D" id="3.90.1280.10">
    <property type="entry name" value="HSP33 redox switch-like"/>
    <property type="match status" value="1"/>
</dbReference>
<dbReference type="HAMAP" id="MF_00117">
    <property type="entry name" value="HslO"/>
    <property type="match status" value="1"/>
</dbReference>
<dbReference type="InterPro" id="IPR000397">
    <property type="entry name" value="Heat_shock_Hsp33"/>
</dbReference>
<dbReference type="InterPro" id="IPR016154">
    <property type="entry name" value="Heat_shock_Hsp33_C"/>
</dbReference>
<dbReference type="InterPro" id="IPR016153">
    <property type="entry name" value="Heat_shock_Hsp33_N"/>
</dbReference>
<dbReference type="NCBIfam" id="NF001033">
    <property type="entry name" value="PRK00114.1"/>
    <property type="match status" value="1"/>
</dbReference>
<dbReference type="PANTHER" id="PTHR30111">
    <property type="entry name" value="33 KDA CHAPERONIN"/>
    <property type="match status" value="1"/>
</dbReference>
<dbReference type="PANTHER" id="PTHR30111:SF1">
    <property type="entry name" value="33 KDA CHAPERONIN"/>
    <property type="match status" value="1"/>
</dbReference>
<dbReference type="Pfam" id="PF01430">
    <property type="entry name" value="HSP33"/>
    <property type="match status" value="1"/>
</dbReference>
<dbReference type="PIRSF" id="PIRSF005261">
    <property type="entry name" value="Heat_shock_Hsp33"/>
    <property type="match status" value="1"/>
</dbReference>
<dbReference type="SUPFAM" id="SSF64397">
    <property type="entry name" value="Hsp33 domain"/>
    <property type="match status" value="1"/>
</dbReference>
<dbReference type="SUPFAM" id="SSF118352">
    <property type="entry name" value="HSP33 redox switch-like"/>
    <property type="match status" value="1"/>
</dbReference>
<comment type="function">
    <text evidence="1">Redox regulated molecular chaperone. Protects both thermally unfolding and oxidatively damaged proteins from irreversible aggregation. Plays an important role in the bacterial defense system toward oxidative stress.</text>
</comment>
<comment type="subcellular location">
    <subcellularLocation>
        <location evidence="1">Cytoplasm</location>
    </subcellularLocation>
</comment>
<comment type="PTM">
    <text evidence="1">Under oxidizing conditions two disulfide bonds are formed involving the reactive cysteines. Under reducing conditions zinc is bound to the reactive cysteines and the protein is inactive.</text>
</comment>
<comment type="similarity">
    <text evidence="1">Belongs to the HSP33 family.</text>
</comment>
<evidence type="ECO:0000255" key="1">
    <source>
        <dbReference type="HAMAP-Rule" id="MF_00117"/>
    </source>
</evidence>
<feature type="chain" id="PRO_1000095038" description="33 kDa chaperonin">
    <location>
        <begin position="1"/>
        <end position="294"/>
    </location>
</feature>
<feature type="disulfide bond" description="Redox-active" evidence="1">
    <location>
        <begin position="238"/>
        <end position="240"/>
    </location>
</feature>
<feature type="disulfide bond" description="Redox-active" evidence="1">
    <location>
        <begin position="271"/>
        <end position="274"/>
    </location>
</feature>
<sequence>MRDYIVRATAYNNKILAIAAFSTQTAQKAKEIHNLTPTTCAALGRALTAVAMMRVMMKGEKDKVTLVIKGDGPIGNIVVVSNYPGIVKGYVGNPTVDLPLSEKGKLDVGKAVGKNGYVTVIKDIGLKEPYVGTVELQTGEIGEDIAYYFYTSEQVPSAVGVGVLVGKEGNVLASGGFIIQLLPNIEEEVVAKVEEALKNISSVTELLRKGYLPEDILNHILGEMGLNILERVDLKYECDCSQERFETAIIALGKEEIKKLIAEGQSVEAVCHFCGKKYLIEESRLKELLRIAEE</sequence>
<organism>
    <name type="scientific">Thermoanaerobacter sp. (strain X514)</name>
    <dbReference type="NCBI Taxonomy" id="399726"/>
    <lineage>
        <taxon>Bacteria</taxon>
        <taxon>Bacillati</taxon>
        <taxon>Bacillota</taxon>
        <taxon>Clostridia</taxon>
        <taxon>Thermoanaerobacterales</taxon>
        <taxon>Thermoanaerobacteraceae</taxon>
        <taxon>Thermoanaerobacter</taxon>
    </lineage>
</organism>
<proteinExistence type="inferred from homology"/>
<protein>
    <recommendedName>
        <fullName evidence="1">33 kDa chaperonin</fullName>
    </recommendedName>
    <alternativeName>
        <fullName evidence="1">Heat shock protein 33 homolog</fullName>
        <shortName evidence="1">HSP33</shortName>
    </alternativeName>
</protein>
<keyword id="KW-0143">Chaperone</keyword>
<keyword id="KW-0963">Cytoplasm</keyword>
<keyword id="KW-1015">Disulfide bond</keyword>
<keyword id="KW-0676">Redox-active center</keyword>
<keyword id="KW-0862">Zinc</keyword>
<accession>B0K3W4</accession>
<gene>
    <name evidence="1" type="primary">hslO</name>
    <name type="ordered locus">Teth514_2063</name>
</gene>